<reference key="1">
    <citation type="journal article" date="2003" name="Proc. Natl. Acad. Sci. U.S.A.">
        <title>Reductive genome evolution in Buchnera aphidicola.</title>
        <authorList>
            <person name="van Ham R.C.H.J."/>
            <person name="Kamerbeek J."/>
            <person name="Palacios C."/>
            <person name="Rausell C."/>
            <person name="Abascal F."/>
            <person name="Bastolla U."/>
            <person name="Fernandez J.M."/>
            <person name="Jimenez L."/>
            <person name="Postigo M."/>
            <person name="Silva F.J."/>
            <person name="Tamames J."/>
            <person name="Viguera E."/>
            <person name="Latorre A."/>
            <person name="Valencia A."/>
            <person name="Moran F."/>
            <person name="Moya A."/>
        </authorList>
    </citation>
    <scope>NUCLEOTIDE SEQUENCE [LARGE SCALE GENOMIC DNA]</scope>
    <source>
        <strain>Bp</strain>
    </source>
</reference>
<protein>
    <recommendedName>
        <fullName evidence="1">Small ribosomal subunit protein uS8</fullName>
    </recommendedName>
    <alternativeName>
        <fullName evidence="2">30S ribosomal protein S8</fullName>
    </alternativeName>
</protein>
<comment type="function">
    <text evidence="1">One of the primary rRNA binding proteins, it binds directly to 16S rRNA central domain where it helps coordinate assembly of the platform of the 30S subunit.</text>
</comment>
<comment type="subunit">
    <text evidence="1">Part of the 30S ribosomal subunit. Contacts proteins S5 and S12.</text>
</comment>
<comment type="similarity">
    <text evidence="1">Belongs to the universal ribosomal protein uS8 family.</text>
</comment>
<accession>P59579</accession>
<dbReference type="EMBL" id="AE016826">
    <property type="protein sequence ID" value="AAO27159.1"/>
    <property type="molecule type" value="Genomic_DNA"/>
</dbReference>
<dbReference type="RefSeq" id="WP_011091560.1">
    <property type="nucleotide sequence ID" value="NC_004545.1"/>
</dbReference>
<dbReference type="SMR" id="P59579"/>
<dbReference type="STRING" id="224915.bbp_453"/>
<dbReference type="KEGG" id="bab:bbp_453"/>
<dbReference type="eggNOG" id="COG0096">
    <property type="taxonomic scope" value="Bacteria"/>
</dbReference>
<dbReference type="HOGENOM" id="CLU_098428_0_0_6"/>
<dbReference type="OrthoDB" id="9802617at2"/>
<dbReference type="Proteomes" id="UP000000601">
    <property type="component" value="Chromosome"/>
</dbReference>
<dbReference type="GO" id="GO:1990904">
    <property type="term" value="C:ribonucleoprotein complex"/>
    <property type="evidence" value="ECO:0007669"/>
    <property type="project" value="UniProtKB-KW"/>
</dbReference>
<dbReference type="GO" id="GO:0005840">
    <property type="term" value="C:ribosome"/>
    <property type="evidence" value="ECO:0007669"/>
    <property type="project" value="UniProtKB-KW"/>
</dbReference>
<dbReference type="GO" id="GO:0019843">
    <property type="term" value="F:rRNA binding"/>
    <property type="evidence" value="ECO:0007669"/>
    <property type="project" value="UniProtKB-UniRule"/>
</dbReference>
<dbReference type="GO" id="GO:0003735">
    <property type="term" value="F:structural constituent of ribosome"/>
    <property type="evidence" value="ECO:0007669"/>
    <property type="project" value="InterPro"/>
</dbReference>
<dbReference type="GO" id="GO:0006412">
    <property type="term" value="P:translation"/>
    <property type="evidence" value="ECO:0007669"/>
    <property type="project" value="UniProtKB-UniRule"/>
</dbReference>
<dbReference type="FunFam" id="3.30.1370.30:FF:000002">
    <property type="entry name" value="30S ribosomal protein S8"/>
    <property type="match status" value="1"/>
</dbReference>
<dbReference type="FunFam" id="3.30.1490.10:FF:000001">
    <property type="entry name" value="30S ribosomal protein S8"/>
    <property type="match status" value="1"/>
</dbReference>
<dbReference type="Gene3D" id="3.30.1370.30">
    <property type="match status" value="1"/>
</dbReference>
<dbReference type="Gene3D" id="3.30.1490.10">
    <property type="match status" value="1"/>
</dbReference>
<dbReference type="HAMAP" id="MF_01302_B">
    <property type="entry name" value="Ribosomal_uS8_B"/>
    <property type="match status" value="1"/>
</dbReference>
<dbReference type="InterPro" id="IPR000630">
    <property type="entry name" value="Ribosomal_uS8"/>
</dbReference>
<dbReference type="InterPro" id="IPR047863">
    <property type="entry name" value="Ribosomal_uS8_CS"/>
</dbReference>
<dbReference type="InterPro" id="IPR035987">
    <property type="entry name" value="Ribosomal_uS8_sf"/>
</dbReference>
<dbReference type="NCBIfam" id="NF001109">
    <property type="entry name" value="PRK00136.1"/>
    <property type="match status" value="1"/>
</dbReference>
<dbReference type="PANTHER" id="PTHR11758">
    <property type="entry name" value="40S RIBOSOMAL PROTEIN S15A"/>
    <property type="match status" value="1"/>
</dbReference>
<dbReference type="Pfam" id="PF00410">
    <property type="entry name" value="Ribosomal_S8"/>
    <property type="match status" value="1"/>
</dbReference>
<dbReference type="SUPFAM" id="SSF56047">
    <property type="entry name" value="Ribosomal protein S8"/>
    <property type="match status" value="1"/>
</dbReference>
<dbReference type="PROSITE" id="PS00053">
    <property type="entry name" value="RIBOSOMAL_S8"/>
    <property type="match status" value="1"/>
</dbReference>
<organism>
    <name type="scientific">Buchnera aphidicola subsp. Baizongia pistaciae (strain Bp)</name>
    <dbReference type="NCBI Taxonomy" id="224915"/>
    <lineage>
        <taxon>Bacteria</taxon>
        <taxon>Pseudomonadati</taxon>
        <taxon>Pseudomonadota</taxon>
        <taxon>Gammaproteobacteria</taxon>
        <taxon>Enterobacterales</taxon>
        <taxon>Erwiniaceae</taxon>
        <taxon>Buchnera</taxon>
    </lineage>
</organism>
<gene>
    <name evidence="1" type="primary">rpsH</name>
    <name type="ordered locus">bbp_453</name>
</gene>
<name>RS8_BUCBP</name>
<proteinExistence type="inferred from homology"/>
<evidence type="ECO:0000255" key="1">
    <source>
        <dbReference type="HAMAP-Rule" id="MF_01302"/>
    </source>
</evidence>
<evidence type="ECO:0000305" key="2"/>
<keyword id="KW-1185">Reference proteome</keyword>
<keyword id="KW-0687">Ribonucleoprotein</keyword>
<keyword id="KW-0689">Ribosomal protein</keyword>
<keyword id="KW-0694">RNA-binding</keyword>
<keyword id="KW-0699">rRNA-binding</keyword>
<feature type="chain" id="PRO_0000126383" description="Small ribosomal subunit protein uS8">
    <location>
        <begin position="1"/>
        <end position="130"/>
    </location>
</feature>
<sequence length="130" mass="14414">MSMQDPIADMLTRIRNGQFASKISVIMPSSKLKVKISILLKEEGYIKDFSVNSTNKPILEIFLKYFRSKPVIENITRVSSPSLRIYARNNKLPQVMSGLGIVIISTSQGVLTDQVARKKGLGGEIICNVS</sequence>